<feature type="chain" id="PRO_1000074771" description="D-alanine--D-alanine ligase">
    <location>
        <begin position="1"/>
        <end position="372"/>
    </location>
</feature>
<feature type="domain" description="ATP-grasp" evidence="2">
    <location>
        <begin position="145"/>
        <end position="349"/>
    </location>
</feature>
<feature type="binding site" evidence="2">
    <location>
        <begin position="176"/>
        <end position="231"/>
    </location>
    <ligand>
        <name>ATP</name>
        <dbReference type="ChEBI" id="CHEBI:30616"/>
    </ligand>
</feature>
<feature type="binding site" evidence="2">
    <location>
        <position position="303"/>
    </location>
    <ligand>
        <name>Mg(2+)</name>
        <dbReference type="ChEBI" id="CHEBI:18420"/>
        <label>1</label>
    </ligand>
</feature>
<feature type="binding site" evidence="2">
    <location>
        <position position="316"/>
    </location>
    <ligand>
        <name>Mg(2+)</name>
        <dbReference type="ChEBI" id="CHEBI:18420"/>
        <label>1</label>
    </ligand>
</feature>
<feature type="binding site" evidence="2">
    <location>
        <position position="316"/>
    </location>
    <ligand>
        <name>Mg(2+)</name>
        <dbReference type="ChEBI" id="CHEBI:18420"/>
        <label>2</label>
    </ligand>
</feature>
<feature type="binding site" evidence="2">
    <location>
        <position position="318"/>
    </location>
    <ligand>
        <name>Mg(2+)</name>
        <dbReference type="ChEBI" id="CHEBI:18420"/>
        <label>2</label>
    </ligand>
</feature>
<sequence>MAEKLHISVLCGGQSTEHEISIQSAKNIVNTLDAAKYLISVIFIDHVGRWYLIDQPEMFLAHSPDHLVKEGSARPITIAFGDAAKPWQSLNGDGRRYSADCVFPMVHGTQGEDGALQGLLELLNLPYVGANVQSSAVCMEKDLTKTVLRAGGIPVVDWHTLSPRDATEGVYQRLLDRWGTSELFVKAVSLGSSVATLPVKTETEFTKAVKEVFRYDDRLMVEPRIRGREIECAVLGNGAPKASLPGEIIPHHDYYSYDAKYLDPNGATTTTSVDLSESVTKQIQQIAIDAFKMVHCSGMARVDFFVTPNNKVLVNEINTIPGFTNISMYPKMWEASGLPCPNLLDQLIELAIDRHQEQQKLIRCYEVKARSL</sequence>
<reference key="1">
    <citation type="journal article" date="2009" name="Infect. Immun.">
        <title>Comparative genomics reveal extensive transposon-mediated genomic plasticity and diversity among potential effector proteins within the genus Coxiella.</title>
        <authorList>
            <person name="Beare P.A."/>
            <person name="Unsworth N."/>
            <person name="Andoh M."/>
            <person name="Voth D.E."/>
            <person name="Omsland A."/>
            <person name="Gilk S.D."/>
            <person name="Williams K.P."/>
            <person name="Sobral B.W."/>
            <person name="Kupko J.J. III"/>
            <person name="Porcella S.F."/>
            <person name="Samuel J.E."/>
            <person name="Heinzen R.A."/>
        </authorList>
    </citation>
    <scope>NUCLEOTIDE SEQUENCE [LARGE SCALE GENOMIC DNA]</scope>
    <source>
        <strain>Dugway 5J108-111</strain>
    </source>
</reference>
<name>DDL_COXBN</name>
<protein>
    <recommendedName>
        <fullName evidence="2">D-alanine--D-alanine ligase</fullName>
        <ecNumber evidence="2">6.3.2.4</ecNumber>
    </recommendedName>
    <alternativeName>
        <fullName evidence="2">D-Ala-D-Ala ligase</fullName>
    </alternativeName>
    <alternativeName>
        <fullName evidence="2">D-alanylalanine synthetase</fullName>
    </alternativeName>
</protein>
<keyword id="KW-0067">ATP-binding</keyword>
<keyword id="KW-0133">Cell shape</keyword>
<keyword id="KW-0961">Cell wall biogenesis/degradation</keyword>
<keyword id="KW-0963">Cytoplasm</keyword>
<keyword id="KW-0436">Ligase</keyword>
<keyword id="KW-0460">Magnesium</keyword>
<keyword id="KW-0464">Manganese</keyword>
<keyword id="KW-0479">Metal-binding</keyword>
<keyword id="KW-0547">Nucleotide-binding</keyword>
<keyword id="KW-0573">Peptidoglycan synthesis</keyword>
<accession>A9KGD2</accession>
<dbReference type="EC" id="6.3.2.4" evidence="2"/>
<dbReference type="EMBL" id="CP000733">
    <property type="protein sequence ID" value="ABS77778.2"/>
    <property type="status" value="ALT_INIT"/>
    <property type="molecule type" value="Genomic_DNA"/>
</dbReference>
<dbReference type="SMR" id="A9KGD2"/>
<dbReference type="KEGG" id="cbd:CBUD_1427"/>
<dbReference type="HOGENOM" id="CLU_039268_0_0_6"/>
<dbReference type="UniPathway" id="UPA00219"/>
<dbReference type="Proteomes" id="UP000008555">
    <property type="component" value="Chromosome"/>
</dbReference>
<dbReference type="GO" id="GO:0005829">
    <property type="term" value="C:cytosol"/>
    <property type="evidence" value="ECO:0007669"/>
    <property type="project" value="TreeGrafter"/>
</dbReference>
<dbReference type="GO" id="GO:0005524">
    <property type="term" value="F:ATP binding"/>
    <property type="evidence" value="ECO:0007669"/>
    <property type="project" value="UniProtKB-KW"/>
</dbReference>
<dbReference type="GO" id="GO:0008716">
    <property type="term" value="F:D-alanine-D-alanine ligase activity"/>
    <property type="evidence" value="ECO:0007669"/>
    <property type="project" value="UniProtKB-UniRule"/>
</dbReference>
<dbReference type="GO" id="GO:0046872">
    <property type="term" value="F:metal ion binding"/>
    <property type="evidence" value="ECO:0007669"/>
    <property type="project" value="UniProtKB-KW"/>
</dbReference>
<dbReference type="GO" id="GO:0071555">
    <property type="term" value="P:cell wall organization"/>
    <property type="evidence" value="ECO:0007669"/>
    <property type="project" value="UniProtKB-KW"/>
</dbReference>
<dbReference type="GO" id="GO:0009252">
    <property type="term" value="P:peptidoglycan biosynthetic process"/>
    <property type="evidence" value="ECO:0007669"/>
    <property type="project" value="UniProtKB-UniRule"/>
</dbReference>
<dbReference type="GO" id="GO:0008360">
    <property type="term" value="P:regulation of cell shape"/>
    <property type="evidence" value="ECO:0007669"/>
    <property type="project" value="UniProtKB-KW"/>
</dbReference>
<dbReference type="FunFam" id="3.30.470.20:FF:000008">
    <property type="entry name" value="D-alanine--D-alanine ligase"/>
    <property type="match status" value="1"/>
</dbReference>
<dbReference type="Gene3D" id="3.40.50.20">
    <property type="match status" value="1"/>
</dbReference>
<dbReference type="Gene3D" id="3.30.1490.20">
    <property type="entry name" value="ATP-grasp fold, A domain"/>
    <property type="match status" value="1"/>
</dbReference>
<dbReference type="Gene3D" id="3.30.470.20">
    <property type="entry name" value="ATP-grasp fold, B domain"/>
    <property type="match status" value="1"/>
</dbReference>
<dbReference type="HAMAP" id="MF_00047">
    <property type="entry name" value="Dala_Dala_lig"/>
    <property type="match status" value="1"/>
</dbReference>
<dbReference type="InterPro" id="IPR011761">
    <property type="entry name" value="ATP-grasp"/>
</dbReference>
<dbReference type="InterPro" id="IPR013815">
    <property type="entry name" value="ATP_grasp_subdomain_1"/>
</dbReference>
<dbReference type="InterPro" id="IPR000291">
    <property type="entry name" value="D-Ala_lig_Van_CS"/>
</dbReference>
<dbReference type="InterPro" id="IPR005905">
    <property type="entry name" value="D_ala_D_ala"/>
</dbReference>
<dbReference type="InterPro" id="IPR011095">
    <property type="entry name" value="Dala_Dala_lig_C"/>
</dbReference>
<dbReference type="InterPro" id="IPR011127">
    <property type="entry name" value="Dala_Dala_lig_N"/>
</dbReference>
<dbReference type="InterPro" id="IPR016185">
    <property type="entry name" value="PreATP-grasp_dom_sf"/>
</dbReference>
<dbReference type="NCBIfam" id="TIGR01205">
    <property type="entry name" value="D_ala_D_alaTIGR"/>
    <property type="match status" value="1"/>
</dbReference>
<dbReference type="NCBIfam" id="NF002528">
    <property type="entry name" value="PRK01966.1-4"/>
    <property type="match status" value="1"/>
</dbReference>
<dbReference type="PANTHER" id="PTHR23132">
    <property type="entry name" value="D-ALANINE--D-ALANINE LIGASE"/>
    <property type="match status" value="1"/>
</dbReference>
<dbReference type="PANTHER" id="PTHR23132:SF25">
    <property type="entry name" value="D-ALANINE--D-ALANINE LIGASE A"/>
    <property type="match status" value="1"/>
</dbReference>
<dbReference type="Pfam" id="PF07478">
    <property type="entry name" value="Dala_Dala_lig_C"/>
    <property type="match status" value="1"/>
</dbReference>
<dbReference type="Pfam" id="PF01820">
    <property type="entry name" value="Dala_Dala_lig_N"/>
    <property type="match status" value="1"/>
</dbReference>
<dbReference type="PIRSF" id="PIRSF039102">
    <property type="entry name" value="Ddl/VanB"/>
    <property type="match status" value="1"/>
</dbReference>
<dbReference type="SUPFAM" id="SSF56059">
    <property type="entry name" value="Glutathione synthetase ATP-binding domain-like"/>
    <property type="match status" value="1"/>
</dbReference>
<dbReference type="SUPFAM" id="SSF52440">
    <property type="entry name" value="PreATP-grasp domain"/>
    <property type="match status" value="1"/>
</dbReference>
<dbReference type="PROSITE" id="PS50975">
    <property type="entry name" value="ATP_GRASP"/>
    <property type="match status" value="1"/>
</dbReference>
<dbReference type="PROSITE" id="PS00843">
    <property type="entry name" value="DALA_DALA_LIGASE_1"/>
    <property type="match status" value="1"/>
</dbReference>
<dbReference type="PROSITE" id="PS00844">
    <property type="entry name" value="DALA_DALA_LIGASE_2"/>
    <property type="match status" value="1"/>
</dbReference>
<comment type="function">
    <text evidence="2">Cell wall formation.</text>
</comment>
<comment type="catalytic activity">
    <reaction evidence="2">
        <text>2 D-alanine + ATP = D-alanyl-D-alanine + ADP + phosphate + H(+)</text>
        <dbReference type="Rhea" id="RHEA:11224"/>
        <dbReference type="ChEBI" id="CHEBI:15378"/>
        <dbReference type="ChEBI" id="CHEBI:30616"/>
        <dbReference type="ChEBI" id="CHEBI:43474"/>
        <dbReference type="ChEBI" id="CHEBI:57416"/>
        <dbReference type="ChEBI" id="CHEBI:57822"/>
        <dbReference type="ChEBI" id="CHEBI:456216"/>
        <dbReference type="EC" id="6.3.2.4"/>
    </reaction>
</comment>
<comment type="cofactor">
    <cofactor evidence="1">
        <name>Mg(2+)</name>
        <dbReference type="ChEBI" id="CHEBI:18420"/>
    </cofactor>
    <cofactor evidence="1">
        <name>Mn(2+)</name>
        <dbReference type="ChEBI" id="CHEBI:29035"/>
    </cofactor>
    <text evidence="1">Binds 2 magnesium or manganese ions per subunit.</text>
</comment>
<comment type="pathway">
    <text evidence="2">Cell wall biogenesis; peptidoglycan biosynthesis.</text>
</comment>
<comment type="subcellular location">
    <subcellularLocation>
        <location evidence="2">Cytoplasm</location>
    </subcellularLocation>
</comment>
<comment type="similarity">
    <text evidence="2">Belongs to the D-alanine--D-alanine ligase family.</text>
</comment>
<comment type="sequence caution" evidence="3">
    <conflict type="erroneous initiation">
        <sequence resource="EMBL-CDS" id="ABS77778"/>
    </conflict>
</comment>
<proteinExistence type="inferred from homology"/>
<gene>
    <name evidence="2" type="primary">ddl</name>
    <name type="ordered locus">CBUD_1427</name>
</gene>
<evidence type="ECO:0000250" key="1"/>
<evidence type="ECO:0000255" key="2">
    <source>
        <dbReference type="HAMAP-Rule" id="MF_00047"/>
    </source>
</evidence>
<evidence type="ECO:0000305" key="3"/>
<organism>
    <name type="scientific">Coxiella burnetii (strain Dugway 5J108-111)</name>
    <dbReference type="NCBI Taxonomy" id="434922"/>
    <lineage>
        <taxon>Bacteria</taxon>
        <taxon>Pseudomonadati</taxon>
        <taxon>Pseudomonadota</taxon>
        <taxon>Gammaproteobacteria</taxon>
        <taxon>Legionellales</taxon>
        <taxon>Coxiellaceae</taxon>
        <taxon>Coxiella</taxon>
    </lineage>
</organism>